<name>S39A5_DANRE</name>
<dbReference type="EMBL" id="BX957355">
    <property type="status" value="NOT_ANNOTATED_CDS"/>
    <property type="molecule type" value="Genomic_DNA"/>
</dbReference>
<dbReference type="SMR" id="P0DX17"/>
<dbReference type="Ensembl" id="ENSDART00000149698">
    <property type="protein sequence ID" value="ENSDARP00000123704"/>
    <property type="gene ID" value="ENSDARG00000079525"/>
</dbReference>
<dbReference type="HOGENOM" id="CLU_015114_13_2_1"/>
<dbReference type="OMA" id="HPETHSA"/>
<dbReference type="Proteomes" id="UP000000437">
    <property type="component" value="Unplaced"/>
</dbReference>
<dbReference type="GO" id="GO:0016323">
    <property type="term" value="C:basolateral plasma membrane"/>
    <property type="evidence" value="ECO:0007669"/>
    <property type="project" value="UniProtKB-SubCell"/>
</dbReference>
<dbReference type="GO" id="GO:0005886">
    <property type="term" value="C:plasma membrane"/>
    <property type="evidence" value="ECO:0000318"/>
    <property type="project" value="GO_Central"/>
</dbReference>
<dbReference type="GO" id="GO:0140410">
    <property type="term" value="F:monoatomic cation:bicarbonate symporter activity"/>
    <property type="evidence" value="ECO:0000318"/>
    <property type="project" value="GO_Central"/>
</dbReference>
<dbReference type="GO" id="GO:0005385">
    <property type="term" value="F:zinc ion transmembrane transporter activity"/>
    <property type="evidence" value="ECO:0000318"/>
    <property type="project" value="GO_Central"/>
</dbReference>
<dbReference type="GO" id="GO:0030003">
    <property type="term" value="P:intracellular monoatomic cation homeostasis"/>
    <property type="evidence" value="ECO:0000318"/>
    <property type="project" value="GO_Central"/>
</dbReference>
<dbReference type="GO" id="GO:0071578">
    <property type="term" value="P:zinc ion import across plasma membrane"/>
    <property type="evidence" value="ECO:0000318"/>
    <property type="project" value="GO_Central"/>
</dbReference>
<dbReference type="InterPro" id="IPR003689">
    <property type="entry name" value="ZIP"/>
</dbReference>
<dbReference type="InterPro" id="IPR050799">
    <property type="entry name" value="ZIP_Transporter"/>
</dbReference>
<dbReference type="PANTHER" id="PTHR12191">
    <property type="entry name" value="SOLUTE CARRIER FAMILY 39"/>
    <property type="match status" value="1"/>
</dbReference>
<dbReference type="PANTHER" id="PTHR12191:SF17">
    <property type="entry name" value="ZINC TRANSPORTER ZIP5"/>
    <property type="match status" value="1"/>
</dbReference>
<dbReference type="Pfam" id="PF02535">
    <property type="entry name" value="Zip"/>
    <property type="match status" value="1"/>
</dbReference>
<organism>
    <name type="scientific">Danio rerio</name>
    <name type="common">Zebrafish</name>
    <name type="synonym">Brachydanio rerio</name>
    <dbReference type="NCBI Taxonomy" id="7955"/>
    <lineage>
        <taxon>Eukaryota</taxon>
        <taxon>Metazoa</taxon>
        <taxon>Chordata</taxon>
        <taxon>Craniata</taxon>
        <taxon>Vertebrata</taxon>
        <taxon>Euteleostomi</taxon>
        <taxon>Actinopterygii</taxon>
        <taxon>Neopterygii</taxon>
        <taxon>Teleostei</taxon>
        <taxon>Ostariophysi</taxon>
        <taxon>Cypriniformes</taxon>
        <taxon>Danionidae</taxon>
        <taxon>Danioninae</taxon>
        <taxon>Danio</taxon>
    </lineage>
</organism>
<proteinExistence type="evidence at transcript level"/>
<feature type="chain" id="PRO_0000458056" description="Zinc transporter ZIP5">
    <location>
        <begin position="1"/>
        <end position="555"/>
    </location>
</feature>
<feature type="topological domain" description="Extracellular" evidence="1">
    <location>
        <begin position="1"/>
        <end position="242"/>
    </location>
</feature>
<feature type="transmembrane region" description="Helical" evidence="2">
    <location>
        <begin position="243"/>
        <end position="263"/>
    </location>
</feature>
<feature type="topological domain" description="Cytoplasmic" evidence="5">
    <location>
        <begin position="264"/>
        <end position="314"/>
    </location>
</feature>
<feature type="transmembrane region" description="Helical" evidence="2">
    <location>
        <begin position="315"/>
        <end position="335"/>
    </location>
</feature>
<feature type="topological domain" description="Extracellular" evidence="5">
    <location>
        <begin position="336"/>
        <end position="408"/>
    </location>
</feature>
<feature type="transmembrane region" description="Helical" evidence="2">
    <location>
        <begin position="409"/>
        <end position="429"/>
    </location>
</feature>
<feature type="topological domain" description="Cytoplasmic" evidence="5">
    <location>
        <begin position="430"/>
        <end position="452"/>
    </location>
</feature>
<feature type="transmembrane region" description="Helical" evidence="2">
    <location>
        <begin position="453"/>
        <end position="473"/>
    </location>
</feature>
<feature type="topological domain" description="Extracellular" evidence="5">
    <location>
        <begin position="474"/>
        <end position="482"/>
    </location>
</feature>
<feature type="transmembrane region" description="Helical" evidence="2">
    <location>
        <begin position="483"/>
        <end position="503"/>
    </location>
</feature>
<feature type="topological domain" description="Cytoplasmic" evidence="5">
    <location>
        <begin position="504"/>
        <end position="518"/>
    </location>
</feature>
<feature type="transmembrane region" description="Helical" evidence="2">
    <location>
        <begin position="519"/>
        <end position="539"/>
    </location>
</feature>
<feature type="topological domain" description="Extracellular" evidence="1">
    <location>
        <begin position="540"/>
        <end position="555"/>
    </location>
</feature>
<feature type="region of interest" description="Disordered" evidence="3">
    <location>
        <begin position="108"/>
        <end position="148"/>
    </location>
</feature>
<feature type="region of interest" description="Disordered" evidence="3">
    <location>
        <begin position="363"/>
        <end position="383"/>
    </location>
</feature>
<feature type="compositionally biased region" description="Polar residues" evidence="3">
    <location>
        <begin position="363"/>
        <end position="374"/>
    </location>
</feature>
<comment type="function">
    <text evidence="1 4">Uniporter that transports zinc(2+) into polarized cells of enterocytes, pancreatic acinar and endoderm cells across the basolateral membrane and participates, notably, in zinc excretion from the intestine by the uptake of zinc from the blood into the intestine. The transport mechanism is temperature- and concentration-dependent and saturable (By similarity). Mediates zinc homeostasis that is essential for venous angiogenesis (PubMed:33081634).</text>
</comment>
<comment type="catalytic activity">
    <reaction evidence="1">
        <text>Zn(2+)(in) = Zn(2+)(out)</text>
        <dbReference type="Rhea" id="RHEA:29351"/>
        <dbReference type="ChEBI" id="CHEBI:29105"/>
    </reaction>
</comment>
<comment type="subcellular location">
    <subcellularLocation>
        <location evidence="1">Basolateral cell membrane</location>
        <topology evidence="1">Multi-pass membrane protein</topology>
    </subcellularLocation>
    <text evidence="1">Zinc can regulate the turnover of protein at the membrane.</text>
</comment>
<comment type="developmental stage">
    <text evidence="4">At 1-2 dpf, expressed uniformly through embryos, and its expression becomes concentrated at the head and gut region by 3 dpf.</text>
</comment>
<comment type="disruption phenotype">
    <text evidence="4">Homozygous knockout fishes laking develop normally until 48 hpf, when they develop cardiac ischaemia.</text>
</comment>
<comment type="similarity">
    <text evidence="5">Belongs to the ZIP transporter (TC 2.A.5) family.</text>
</comment>
<protein>
    <recommendedName>
        <fullName>Zinc transporter ZIP5</fullName>
    </recommendedName>
    <alternativeName>
        <fullName>Solute carrier family 39 member 5</fullName>
    </alternativeName>
    <alternativeName>
        <fullName evidence="1">Zrt- and Irt-like protein 5</fullName>
        <shortName evidence="1">ZIP-5</shortName>
    </alternativeName>
</protein>
<accession>P0DX17</accession>
<reference key="1">
    <citation type="journal article" date="2013" name="Nature">
        <title>The zebrafish reference genome sequence and its relationship to the human genome.</title>
        <authorList>
            <person name="Howe K."/>
            <person name="Clark M.D."/>
            <person name="Torroja C.F."/>
            <person name="Torrance J."/>
            <person name="Berthelot C."/>
            <person name="Muffato M."/>
            <person name="Collins J.E."/>
            <person name="Humphray S."/>
            <person name="McLaren K."/>
            <person name="Matthews L."/>
            <person name="McLaren S."/>
            <person name="Sealy I."/>
            <person name="Caccamo M."/>
            <person name="Churcher C."/>
            <person name="Scott C."/>
            <person name="Barrett J.C."/>
            <person name="Koch R."/>
            <person name="Rauch G.J."/>
            <person name="White S."/>
            <person name="Chow W."/>
            <person name="Kilian B."/>
            <person name="Quintais L.T."/>
            <person name="Guerra-Assuncao J.A."/>
            <person name="Zhou Y."/>
            <person name="Gu Y."/>
            <person name="Yen J."/>
            <person name="Vogel J.H."/>
            <person name="Eyre T."/>
            <person name="Redmond S."/>
            <person name="Banerjee R."/>
            <person name="Chi J."/>
            <person name="Fu B."/>
            <person name="Langley E."/>
            <person name="Maguire S.F."/>
            <person name="Laird G.K."/>
            <person name="Lloyd D."/>
            <person name="Kenyon E."/>
            <person name="Donaldson S."/>
            <person name="Sehra H."/>
            <person name="Almeida-King J."/>
            <person name="Loveland J."/>
            <person name="Trevanion S."/>
            <person name="Jones M."/>
            <person name="Quail M."/>
            <person name="Willey D."/>
            <person name="Hunt A."/>
            <person name="Burton J."/>
            <person name="Sims S."/>
            <person name="McLay K."/>
            <person name="Plumb B."/>
            <person name="Davis J."/>
            <person name="Clee C."/>
            <person name="Oliver K."/>
            <person name="Clark R."/>
            <person name="Riddle C."/>
            <person name="Elliot D."/>
            <person name="Threadgold G."/>
            <person name="Harden G."/>
            <person name="Ware D."/>
            <person name="Begum S."/>
            <person name="Mortimore B."/>
            <person name="Kerry G."/>
            <person name="Heath P."/>
            <person name="Phillimore B."/>
            <person name="Tracey A."/>
            <person name="Corby N."/>
            <person name="Dunn M."/>
            <person name="Johnson C."/>
            <person name="Wood J."/>
            <person name="Clark S."/>
            <person name="Pelan S."/>
            <person name="Griffiths G."/>
            <person name="Smith M."/>
            <person name="Glithero R."/>
            <person name="Howden P."/>
            <person name="Barker N."/>
            <person name="Lloyd C."/>
            <person name="Stevens C."/>
            <person name="Harley J."/>
            <person name="Holt K."/>
            <person name="Panagiotidis G."/>
            <person name="Lovell J."/>
            <person name="Beasley H."/>
            <person name="Henderson C."/>
            <person name="Gordon D."/>
            <person name="Auger K."/>
            <person name="Wright D."/>
            <person name="Collins J."/>
            <person name="Raisen C."/>
            <person name="Dyer L."/>
            <person name="Leung K."/>
            <person name="Robertson L."/>
            <person name="Ambridge K."/>
            <person name="Leongamornlert D."/>
            <person name="McGuire S."/>
            <person name="Gilderthorp R."/>
            <person name="Griffiths C."/>
            <person name="Manthravadi D."/>
            <person name="Nichol S."/>
            <person name="Barker G."/>
            <person name="Whitehead S."/>
            <person name="Kay M."/>
            <person name="Brown J."/>
            <person name="Murnane C."/>
            <person name="Gray E."/>
            <person name="Humphries M."/>
            <person name="Sycamore N."/>
            <person name="Barker D."/>
            <person name="Saunders D."/>
            <person name="Wallis J."/>
            <person name="Babbage A."/>
            <person name="Hammond S."/>
            <person name="Mashreghi-Mohammadi M."/>
            <person name="Barr L."/>
            <person name="Martin S."/>
            <person name="Wray P."/>
            <person name="Ellington A."/>
            <person name="Matthews N."/>
            <person name="Ellwood M."/>
            <person name="Woodmansey R."/>
            <person name="Clark G."/>
            <person name="Cooper J."/>
            <person name="Tromans A."/>
            <person name="Grafham D."/>
            <person name="Skuce C."/>
            <person name="Pandian R."/>
            <person name="Andrews R."/>
            <person name="Harrison E."/>
            <person name="Kimberley A."/>
            <person name="Garnett J."/>
            <person name="Fosker N."/>
            <person name="Hall R."/>
            <person name="Garner P."/>
            <person name="Kelly D."/>
            <person name="Bird C."/>
            <person name="Palmer S."/>
            <person name="Gehring I."/>
            <person name="Berger A."/>
            <person name="Dooley C.M."/>
            <person name="Ersan-Urun Z."/>
            <person name="Eser C."/>
            <person name="Geiger H."/>
            <person name="Geisler M."/>
            <person name="Karotki L."/>
            <person name="Kirn A."/>
            <person name="Konantz J."/>
            <person name="Konantz M."/>
            <person name="Oberlander M."/>
            <person name="Rudolph-Geiger S."/>
            <person name="Teucke M."/>
            <person name="Lanz C."/>
            <person name="Raddatz G."/>
            <person name="Osoegawa K."/>
            <person name="Zhu B."/>
            <person name="Rapp A."/>
            <person name="Widaa S."/>
            <person name="Langford C."/>
            <person name="Yang F."/>
            <person name="Schuster S.C."/>
            <person name="Carter N.P."/>
            <person name="Harrow J."/>
            <person name="Ning Z."/>
            <person name="Herrero J."/>
            <person name="Searle S.M."/>
            <person name="Enright A."/>
            <person name="Geisler R."/>
            <person name="Plasterk R.H."/>
            <person name="Lee C."/>
            <person name="Westerfield M."/>
            <person name="de Jong P.J."/>
            <person name="Zon L.I."/>
            <person name="Postlethwait J.H."/>
            <person name="Nusslein-Volhard C."/>
            <person name="Hubbard T.J."/>
            <person name="Roest Crollius H."/>
            <person name="Rogers J."/>
            <person name="Stemple D.L."/>
        </authorList>
    </citation>
    <scope>NUCLEOTIDE SEQUENCE [LARGE SCALE GENOMIC DNA]</scope>
    <source>
        <strain>Tuebingen</strain>
    </source>
</reference>
<reference key="2">
    <citation type="journal article" date="2020" name="Open Biol.">
        <title>Slc39a5-mediated zinc homeostasis plays an essential role in venous angiogenesis in zebrafish.</title>
        <authorList>
            <person name="Xia Z."/>
            <person name="Bi X."/>
            <person name="Lian J."/>
            <person name="Dai W."/>
            <person name="He X."/>
            <person name="Zhao L."/>
            <person name="Min J."/>
            <person name="Wang F."/>
        </authorList>
    </citation>
    <scope>FUNCTION</scope>
    <scope>DISRUPTION PHENOTYPE</scope>
    <scope>INDUCTION</scope>
    <scope>DEVELOPMENTAL STAGE</scope>
</reference>
<sequence length="555" mass="60009">MGGQTVWMTLSFKLLLYYCMISLLMPAIFILATRAQVDKFRKFNESTQTKSSQELFEEAFEEQGYYLQRLFLQYGDNGTLTYEGLQKLLGSLGLGEVSVLEIRHGEAKHPSQSISHSHSHEDHHPSQGTTNSPPLRESLDAKSALSGSPAELGRSDYFLHPALRNKQEESVSLLSDHPTEKHLHGNCLNVTQLLWNFGLGQASHITPAHFTFLCPALLYQIESGVCLRHTEDHSQASKTSEGFLIALGWASLALLVISLPSLVALGMAPLLQPSVLQVFLCPMAGMAVGTLCGDALLHLMPHAIFSQHTDHQNAVFKGLSVLGGLYLLFIFESLLGLKQHFKNLKRRKHDAECGRELDALQGTSSANQNESSGHGHSHGQAEPGQTGIRSMAWMVVMGDGIHNLTDGLAIGVAFSQSLTGGFSTAIAVFCHELPHELGDLAVLLSAGWPVRRLLVFSGLSALLGFVGVLAGSALGNHWASHSPWILTLTAGVFLYVALADMMPEMLHGACGSVSPLKRFLLQALGLLTGGAIMLCIALFEDHIAVSLGENSLGEN</sequence>
<keyword id="KW-1003">Cell membrane</keyword>
<keyword id="KW-0406">Ion transport</keyword>
<keyword id="KW-0472">Membrane</keyword>
<keyword id="KW-1185">Reference proteome</keyword>
<keyword id="KW-0812">Transmembrane</keyword>
<keyword id="KW-1133">Transmembrane helix</keyword>
<keyword id="KW-0813">Transport</keyword>
<keyword id="KW-0862">Zinc</keyword>
<keyword id="KW-0864">Zinc transport</keyword>
<evidence type="ECO:0000250" key="1">
    <source>
        <dbReference type="UniProtKB" id="Q9D856"/>
    </source>
</evidence>
<evidence type="ECO:0000255" key="2"/>
<evidence type="ECO:0000256" key="3">
    <source>
        <dbReference type="SAM" id="MobiDB-lite"/>
    </source>
</evidence>
<evidence type="ECO:0000269" key="4">
    <source>
    </source>
</evidence>
<evidence type="ECO:0000305" key="5"/>
<gene>
    <name type="primary">slc39a5</name>
    <name evidence="1" type="synonym">zip5</name>
</gene>